<dbReference type="EC" id="6.1.1.14" evidence="1"/>
<dbReference type="EMBL" id="CP000056">
    <property type="protein sequence ID" value="AAX72538.1"/>
    <property type="molecule type" value="Genomic_DNA"/>
</dbReference>
<dbReference type="RefSeq" id="WP_010922565.1">
    <property type="nucleotide sequence ID" value="NC_007296.2"/>
</dbReference>
<dbReference type="SMR" id="Q48RX2"/>
<dbReference type="KEGG" id="spb:M28_Spy1428"/>
<dbReference type="HOGENOM" id="CLU_057066_1_0_9"/>
<dbReference type="GO" id="GO:0005829">
    <property type="term" value="C:cytosol"/>
    <property type="evidence" value="ECO:0007669"/>
    <property type="project" value="TreeGrafter"/>
</dbReference>
<dbReference type="GO" id="GO:0005524">
    <property type="term" value="F:ATP binding"/>
    <property type="evidence" value="ECO:0007669"/>
    <property type="project" value="UniProtKB-UniRule"/>
</dbReference>
<dbReference type="GO" id="GO:0140096">
    <property type="term" value="F:catalytic activity, acting on a protein"/>
    <property type="evidence" value="ECO:0007669"/>
    <property type="project" value="UniProtKB-ARBA"/>
</dbReference>
<dbReference type="GO" id="GO:0004820">
    <property type="term" value="F:glycine-tRNA ligase activity"/>
    <property type="evidence" value="ECO:0007669"/>
    <property type="project" value="UniProtKB-UniRule"/>
</dbReference>
<dbReference type="GO" id="GO:0016740">
    <property type="term" value="F:transferase activity"/>
    <property type="evidence" value="ECO:0007669"/>
    <property type="project" value="UniProtKB-ARBA"/>
</dbReference>
<dbReference type="GO" id="GO:0006426">
    <property type="term" value="P:glycyl-tRNA aminoacylation"/>
    <property type="evidence" value="ECO:0007669"/>
    <property type="project" value="UniProtKB-UniRule"/>
</dbReference>
<dbReference type="CDD" id="cd00733">
    <property type="entry name" value="GlyRS_alpha_core"/>
    <property type="match status" value="1"/>
</dbReference>
<dbReference type="FunFam" id="3.30.930.10:FF:000006">
    <property type="entry name" value="Glycine--tRNA ligase alpha subunit"/>
    <property type="match status" value="1"/>
</dbReference>
<dbReference type="Gene3D" id="3.30.930.10">
    <property type="entry name" value="Bira Bifunctional Protein, Domain 2"/>
    <property type="match status" value="1"/>
</dbReference>
<dbReference type="Gene3D" id="1.20.58.180">
    <property type="entry name" value="Class II aaRS and biotin synthetases, domain 2"/>
    <property type="match status" value="1"/>
</dbReference>
<dbReference type="HAMAP" id="MF_00254">
    <property type="entry name" value="Gly_tRNA_synth_alpha"/>
    <property type="match status" value="1"/>
</dbReference>
<dbReference type="InterPro" id="IPR045864">
    <property type="entry name" value="aa-tRNA-synth_II/BPL/LPL"/>
</dbReference>
<dbReference type="InterPro" id="IPR006194">
    <property type="entry name" value="Gly-tRNA-synth_heterodimer"/>
</dbReference>
<dbReference type="InterPro" id="IPR002310">
    <property type="entry name" value="Gly-tRNA_ligase_asu"/>
</dbReference>
<dbReference type="NCBIfam" id="TIGR00388">
    <property type="entry name" value="glyQ"/>
    <property type="match status" value="1"/>
</dbReference>
<dbReference type="NCBIfam" id="NF006827">
    <property type="entry name" value="PRK09348.1"/>
    <property type="match status" value="1"/>
</dbReference>
<dbReference type="PANTHER" id="PTHR30075:SF2">
    <property type="entry name" value="GLYCINE--TRNA LIGASE, CHLOROPLASTIC_MITOCHONDRIAL 2"/>
    <property type="match status" value="1"/>
</dbReference>
<dbReference type="PANTHER" id="PTHR30075">
    <property type="entry name" value="GLYCYL-TRNA SYNTHETASE"/>
    <property type="match status" value="1"/>
</dbReference>
<dbReference type="Pfam" id="PF02091">
    <property type="entry name" value="tRNA-synt_2e"/>
    <property type="match status" value="1"/>
</dbReference>
<dbReference type="PRINTS" id="PR01044">
    <property type="entry name" value="TRNASYNTHGA"/>
</dbReference>
<dbReference type="SUPFAM" id="SSF55681">
    <property type="entry name" value="Class II aaRS and biotin synthetases"/>
    <property type="match status" value="1"/>
</dbReference>
<dbReference type="PROSITE" id="PS50861">
    <property type="entry name" value="AA_TRNA_LIGASE_II_GLYAB"/>
    <property type="match status" value="1"/>
</dbReference>
<protein>
    <recommendedName>
        <fullName evidence="1">Glycine--tRNA ligase alpha subunit</fullName>
        <ecNumber evidence="1">6.1.1.14</ecNumber>
    </recommendedName>
    <alternativeName>
        <fullName evidence="1">Glycyl-tRNA synthetase alpha subunit</fullName>
        <shortName evidence="1">GlyRS</shortName>
    </alternativeName>
</protein>
<keyword id="KW-0030">Aminoacyl-tRNA synthetase</keyword>
<keyword id="KW-0067">ATP-binding</keyword>
<keyword id="KW-0963">Cytoplasm</keyword>
<keyword id="KW-0436">Ligase</keyword>
<keyword id="KW-0547">Nucleotide-binding</keyword>
<keyword id="KW-0648">Protein biosynthesis</keyword>
<feature type="chain" id="PRO_1000047505" description="Glycine--tRNA ligase alpha subunit">
    <location>
        <begin position="1"/>
        <end position="305"/>
    </location>
</feature>
<proteinExistence type="inferred from homology"/>
<evidence type="ECO:0000255" key="1">
    <source>
        <dbReference type="HAMAP-Rule" id="MF_00254"/>
    </source>
</evidence>
<organism>
    <name type="scientific">Streptococcus pyogenes serotype M28 (strain MGAS6180)</name>
    <dbReference type="NCBI Taxonomy" id="319701"/>
    <lineage>
        <taxon>Bacteria</taxon>
        <taxon>Bacillati</taxon>
        <taxon>Bacillota</taxon>
        <taxon>Bacilli</taxon>
        <taxon>Lactobacillales</taxon>
        <taxon>Streptococcaceae</taxon>
        <taxon>Streptococcus</taxon>
    </lineage>
</organism>
<name>SYGA_STRPM</name>
<accession>Q48RX2</accession>
<reference key="1">
    <citation type="journal article" date="2005" name="J. Infect. Dis.">
        <title>Genome sequence of a serotype M28 strain of group A Streptococcus: potential new insights into puerperal sepsis and bacterial disease specificity.</title>
        <authorList>
            <person name="Green N.M."/>
            <person name="Zhang S."/>
            <person name="Porcella S.F."/>
            <person name="Nagiec M.J."/>
            <person name="Barbian K.D."/>
            <person name="Beres S.B."/>
            <person name="Lefebvre R.B."/>
            <person name="Musser J.M."/>
        </authorList>
    </citation>
    <scope>NUCLEOTIDE SEQUENCE [LARGE SCALE GENOMIC DNA]</scope>
    <source>
        <strain>MGAS6180</strain>
    </source>
</reference>
<sequence>MSKKLTFQEIILTLQQYWNDQGCMLMQAYDNEKGAGTMSPYTFLRAIGPEPWNAAYVEPSRRPADGRYGENPNRLYQHHQFQVVMKPSPSNIQELYLASLEKLGINPLEHDIRFVEDNWENPSTGSAGLGWEVWLDGMEITQFTYFQQVGGLATSPVTAEVTYGLERLASYIQEVDSVYDIEWAPGVKYGEIFLQPEYEHSKYSFEISDQDMLLENFEKFEKEASRALEEGLVHPAYDYVLKCSHTFNLLDARGAVSVTERAGYIARIRNLARVVAKTFVAERKKLGFPLLDEATRAILLAEDDE</sequence>
<gene>
    <name evidence="1" type="primary">glyQ</name>
    <name type="ordered locus">M28_Spy1428</name>
</gene>
<comment type="catalytic activity">
    <reaction evidence="1">
        <text>tRNA(Gly) + glycine + ATP = glycyl-tRNA(Gly) + AMP + diphosphate</text>
        <dbReference type="Rhea" id="RHEA:16013"/>
        <dbReference type="Rhea" id="RHEA-COMP:9664"/>
        <dbReference type="Rhea" id="RHEA-COMP:9683"/>
        <dbReference type="ChEBI" id="CHEBI:30616"/>
        <dbReference type="ChEBI" id="CHEBI:33019"/>
        <dbReference type="ChEBI" id="CHEBI:57305"/>
        <dbReference type="ChEBI" id="CHEBI:78442"/>
        <dbReference type="ChEBI" id="CHEBI:78522"/>
        <dbReference type="ChEBI" id="CHEBI:456215"/>
        <dbReference type="EC" id="6.1.1.14"/>
    </reaction>
</comment>
<comment type="subunit">
    <text evidence="1">Tetramer of two alpha and two beta subunits.</text>
</comment>
<comment type="subcellular location">
    <subcellularLocation>
        <location evidence="1">Cytoplasm</location>
    </subcellularLocation>
</comment>
<comment type="similarity">
    <text evidence="1">Belongs to the class-II aminoacyl-tRNA synthetase family.</text>
</comment>